<gene>
    <name type="primary">ftsK</name>
    <name type="ordered locus">Z1235</name>
    <name type="ordered locus">ECs0975</name>
</gene>
<evidence type="ECO:0000250" key="1"/>
<evidence type="ECO:0000250" key="2">
    <source>
        <dbReference type="UniProtKB" id="P46889"/>
    </source>
</evidence>
<evidence type="ECO:0000255" key="3">
    <source>
        <dbReference type="PROSITE-ProRule" id="PRU00289"/>
    </source>
</evidence>
<evidence type="ECO:0000256" key="4">
    <source>
        <dbReference type="SAM" id="MobiDB-lite"/>
    </source>
</evidence>
<evidence type="ECO:0000305" key="5"/>
<name>FTSK_ECO57</name>
<dbReference type="EMBL" id="AE005174">
    <property type="protein sequence ID" value="AAG55377.1"/>
    <property type="molecule type" value="Genomic_DNA"/>
</dbReference>
<dbReference type="EMBL" id="BA000007">
    <property type="protein sequence ID" value="BAB34398.1"/>
    <property type="molecule type" value="Genomic_DNA"/>
</dbReference>
<dbReference type="PIR" id="E85614">
    <property type="entry name" value="E85614"/>
</dbReference>
<dbReference type="PIR" id="G90750">
    <property type="entry name" value="G90750"/>
</dbReference>
<dbReference type="RefSeq" id="NP_309002.1">
    <property type="nucleotide sequence ID" value="NC_002695.1"/>
</dbReference>
<dbReference type="RefSeq" id="WP_000076999.1">
    <property type="nucleotide sequence ID" value="NZ_VOAI01000006.1"/>
</dbReference>
<dbReference type="SMR" id="Q8X5H9"/>
<dbReference type="STRING" id="155864.Z1235"/>
<dbReference type="GeneID" id="917727"/>
<dbReference type="KEGG" id="ece:Z1235"/>
<dbReference type="KEGG" id="ecs:ECs_0975"/>
<dbReference type="PATRIC" id="fig|386585.9.peg.1092"/>
<dbReference type="eggNOG" id="COG1178">
    <property type="taxonomic scope" value="Bacteria"/>
</dbReference>
<dbReference type="eggNOG" id="COG1674">
    <property type="taxonomic scope" value="Bacteria"/>
</dbReference>
<dbReference type="HOGENOM" id="CLU_001981_0_2_6"/>
<dbReference type="OMA" id="DPFWKPG"/>
<dbReference type="Proteomes" id="UP000000558">
    <property type="component" value="Chromosome"/>
</dbReference>
<dbReference type="Proteomes" id="UP000002519">
    <property type="component" value="Chromosome"/>
</dbReference>
<dbReference type="GO" id="GO:0005886">
    <property type="term" value="C:plasma membrane"/>
    <property type="evidence" value="ECO:0007669"/>
    <property type="project" value="UniProtKB-SubCell"/>
</dbReference>
<dbReference type="GO" id="GO:0005524">
    <property type="term" value="F:ATP binding"/>
    <property type="evidence" value="ECO:0007669"/>
    <property type="project" value="UniProtKB-KW"/>
</dbReference>
<dbReference type="GO" id="GO:0003677">
    <property type="term" value="F:DNA binding"/>
    <property type="evidence" value="ECO:0007669"/>
    <property type="project" value="UniProtKB-KW"/>
</dbReference>
<dbReference type="GO" id="GO:0051301">
    <property type="term" value="P:cell division"/>
    <property type="evidence" value="ECO:0007669"/>
    <property type="project" value="UniProtKB-KW"/>
</dbReference>
<dbReference type="GO" id="GO:0007059">
    <property type="term" value="P:chromosome segregation"/>
    <property type="evidence" value="ECO:0007669"/>
    <property type="project" value="UniProtKB-KW"/>
</dbReference>
<dbReference type="CDD" id="cd01127">
    <property type="entry name" value="TrwB_TraG_TraD_VirD4"/>
    <property type="match status" value="1"/>
</dbReference>
<dbReference type="FunFam" id="3.40.50.300:FF:000209">
    <property type="entry name" value="Cell division protein FtsK"/>
    <property type="match status" value="1"/>
</dbReference>
<dbReference type="FunFam" id="1.10.10.10:FF:000268">
    <property type="entry name" value="DNA translocase FtsK"/>
    <property type="match status" value="1"/>
</dbReference>
<dbReference type="FunFam" id="3.30.980.40:FF:000001">
    <property type="entry name" value="DNA translocase FtsK"/>
    <property type="match status" value="1"/>
</dbReference>
<dbReference type="Gene3D" id="3.30.980.40">
    <property type="match status" value="1"/>
</dbReference>
<dbReference type="Gene3D" id="3.40.50.300">
    <property type="entry name" value="P-loop containing nucleotide triphosphate hydrolases"/>
    <property type="match status" value="1"/>
</dbReference>
<dbReference type="Gene3D" id="1.10.10.10">
    <property type="entry name" value="Winged helix-like DNA-binding domain superfamily/Winged helix DNA-binding domain"/>
    <property type="match status" value="1"/>
</dbReference>
<dbReference type="InterPro" id="IPR050206">
    <property type="entry name" value="FtsK/SpoIIIE/SftA"/>
</dbReference>
<dbReference type="InterPro" id="IPR025199">
    <property type="entry name" value="FtsK_4TM"/>
</dbReference>
<dbReference type="InterPro" id="IPR041027">
    <property type="entry name" value="FtsK_alpha"/>
</dbReference>
<dbReference type="InterPro" id="IPR002543">
    <property type="entry name" value="FtsK_dom"/>
</dbReference>
<dbReference type="InterPro" id="IPR018541">
    <property type="entry name" value="Ftsk_gamma"/>
</dbReference>
<dbReference type="InterPro" id="IPR027417">
    <property type="entry name" value="P-loop_NTPase"/>
</dbReference>
<dbReference type="InterPro" id="IPR036388">
    <property type="entry name" value="WH-like_DNA-bd_sf"/>
</dbReference>
<dbReference type="InterPro" id="IPR036390">
    <property type="entry name" value="WH_DNA-bd_sf"/>
</dbReference>
<dbReference type="NCBIfam" id="NF007615">
    <property type="entry name" value="PRK10263.1"/>
    <property type="match status" value="1"/>
</dbReference>
<dbReference type="PANTHER" id="PTHR22683:SF41">
    <property type="entry name" value="DNA TRANSLOCASE FTSK"/>
    <property type="match status" value="1"/>
</dbReference>
<dbReference type="PANTHER" id="PTHR22683">
    <property type="entry name" value="SPORULATION PROTEIN RELATED"/>
    <property type="match status" value="1"/>
</dbReference>
<dbReference type="Pfam" id="PF13491">
    <property type="entry name" value="FtsK_4TM"/>
    <property type="match status" value="1"/>
</dbReference>
<dbReference type="Pfam" id="PF17854">
    <property type="entry name" value="FtsK_alpha"/>
    <property type="match status" value="1"/>
</dbReference>
<dbReference type="Pfam" id="PF09397">
    <property type="entry name" value="FtsK_gamma"/>
    <property type="match status" value="1"/>
</dbReference>
<dbReference type="Pfam" id="PF01580">
    <property type="entry name" value="FtsK_SpoIIIE"/>
    <property type="match status" value="1"/>
</dbReference>
<dbReference type="SMART" id="SM00843">
    <property type="entry name" value="Ftsk_gamma"/>
    <property type="match status" value="1"/>
</dbReference>
<dbReference type="SUPFAM" id="SSF52540">
    <property type="entry name" value="P-loop containing nucleoside triphosphate hydrolases"/>
    <property type="match status" value="1"/>
</dbReference>
<dbReference type="SUPFAM" id="SSF46785">
    <property type="entry name" value="Winged helix' DNA-binding domain"/>
    <property type="match status" value="1"/>
</dbReference>
<dbReference type="PROSITE" id="PS50901">
    <property type="entry name" value="FTSK"/>
    <property type="match status" value="1"/>
</dbReference>
<keyword id="KW-0067">ATP-binding</keyword>
<keyword id="KW-0131">Cell cycle</keyword>
<keyword id="KW-0132">Cell division</keyword>
<keyword id="KW-0997">Cell inner membrane</keyword>
<keyword id="KW-1003">Cell membrane</keyword>
<keyword id="KW-0159">Chromosome partition</keyword>
<keyword id="KW-0238">DNA-binding</keyword>
<keyword id="KW-0472">Membrane</keyword>
<keyword id="KW-0547">Nucleotide-binding</keyword>
<keyword id="KW-1185">Reference proteome</keyword>
<keyword id="KW-0812">Transmembrane</keyword>
<keyword id="KW-1133">Transmembrane helix</keyword>
<organism>
    <name type="scientific">Escherichia coli O157:H7</name>
    <dbReference type="NCBI Taxonomy" id="83334"/>
    <lineage>
        <taxon>Bacteria</taxon>
        <taxon>Pseudomonadati</taxon>
        <taxon>Pseudomonadota</taxon>
        <taxon>Gammaproteobacteria</taxon>
        <taxon>Enterobacterales</taxon>
        <taxon>Enterobacteriaceae</taxon>
        <taxon>Escherichia</taxon>
    </lineage>
</organism>
<protein>
    <recommendedName>
        <fullName>DNA translocase FtsK</fullName>
    </recommendedName>
</protein>
<sequence>MSQEYTEDKEVTLTKLSSGRRLLEALLILIVLFAVWLMAALLSFNPSDPSWSQTAWHEPIHNLGGMPGAWLADTLFFIFGVMAYTIPVIIVGGCWFAWRHQSSDENIDYFAVSLRIIGVLALILTSCGLAAINADDIWYFASGGVIGSLLSTTLQPLLHSSGGTIALLCVWAAGLTLFTGWSWVTIAEKLGGWILNILTFASNRTRRDDTWVDEDEYEDDEEYEDENHGKQHESRRARILRGALARRKRLAEKFINPMGRQTDAALFSGKRMDDDEEITYTARGVAADPDDVLFSGNRATQPEYDEYDPLLNGAPITEPVAVAAAATTATQSWAAPVEPVTQTPPVASVDVPPSQPTVAWQPVPGPQTGEPVIAPAPEGYPQQSQYAQPAVQYNEPLQQPVQPQQPYYAPAAEQPAQQPYYAPAPEQPVAGNAWQAEEQQSTFAPQSTYQTEQTYQQPAAQEPLYQQPQPVEQQPVVEPEPVVEETKPARPPLYYFEEVEEKRAREREQLAAWYQPIPEPVKEPEPIKSSLKAPSVAAVPPVEAAAAVSPLASGVKKATLATGAAATVAAPVFSLANSGGPRPQVKEGIGPQLPRPKRIRVPTRRELASYGIKLPSQRAAEEKAREAQRNQYDSGDQYNDDEIDAMQQDELARQFAQTQQQRYGEQYQHDVPVNAEDADAAAEAELARQFAQTQQQRYSGEQPAGANPFSLDDFEFSPMKALLDDGPHEPLFTPIVEPVQQPQQPVAPQQQYQQPQQPVAPQPQYQQPQQQVAPQPQYQQPQQPVAPQQQYQQPQQPVAPQPQYQQPQQPVAPQPQYQQPQQPVAPQPQDTLLHPLLMRNGDSRPLHKPTTPLPSLDLLTPPPSEVEPVDTFALEQMARLVEARLADFRIKADVVNYSPGPVITRFELNLAPGVKAARISNLSRDLARSLSTVAVRVVEVIPGKPYVGLELPNKKRQTVYLREVLDNAKFRDNPSPLTVVLGKDIAGEPVVADLAKMPHLLVAGTTGSGKSVGVNAMILSMLYKAQPEDVRFIMIDPKMLELSVYEGIPHLLTEVVTDMKDAANALRWCVNEMERRYKLMSALGVRNLAGYNEKIAEADRMMRPIPDPYWKPGDSMDAQHPVLKKEPYIVVLVDEFADLMMTVGKKVEELIARLAQKARAAGIHLVLATQRPSVDVITGLIKANIPTRIAFTVSSKIDSRTILDQAGAESLLGMGDMLYSGPNSTLPVRVHGAFVRDQEVHAVVQDWKARGRPQYVDGITSDSESEGGAGGFDGAEELDPLFDQAVQFVTEKRKASISGVQRQFRIGYNRAARIIEQMEAQGIVSEQGHNGNREVLSPPPFD</sequence>
<reference key="1">
    <citation type="journal article" date="2001" name="Nature">
        <title>Genome sequence of enterohaemorrhagic Escherichia coli O157:H7.</title>
        <authorList>
            <person name="Perna N.T."/>
            <person name="Plunkett G. III"/>
            <person name="Burland V."/>
            <person name="Mau B."/>
            <person name="Glasner J.D."/>
            <person name="Rose D.J."/>
            <person name="Mayhew G.F."/>
            <person name="Evans P.S."/>
            <person name="Gregor J."/>
            <person name="Kirkpatrick H.A."/>
            <person name="Posfai G."/>
            <person name="Hackett J."/>
            <person name="Klink S."/>
            <person name="Boutin A."/>
            <person name="Shao Y."/>
            <person name="Miller L."/>
            <person name="Grotbeck E.J."/>
            <person name="Davis N.W."/>
            <person name="Lim A."/>
            <person name="Dimalanta E.T."/>
            <person name="Potamousis K."/>
            <person name="Apodaca J."/>
            <person name="Anantharaman T.S."/>
            <person name="Lin J."/>
            <person name="Yen G."/>
            <person name="Schwartz D.C."/>
            <person name="Welch R.A."/>
            <person name="Blattner F.R."/>
        </authorList>
    </citation>
    <scope>NUCLEOTIDE SEQUENCE [LARGE SCALE GENOMIC DNA]</scope>
    <source>
        <strain>O157:H7 / EDL933 / ATCC 700927 / EHEC</strain>
    </source>
</reference>
<reference key="2">
    <citation type="journal article" date="2001" name="DNA Res.">
        <title>Complete genome sequence of enterohemorrhagic Escherichia coli O157:H7 and genomic comparison with a laboratory strain K-12.</title>
        <authorList>
            <person name="Hayashi T."/>
            <person name="Makino K."/>
            <person name="Ohnishi M."/>
            <person name="Kurokawa K."/>
            <person name="Ishii K."/>
            <person name="Yokoyama K."/>
            <person name="Han C.-G."/>
            <person name="Ohtsubo E."/>
            <person name="Nakayama K."/>
            <person name="Murata T."/>
            <person name="Tanaka M."/>
            <person name="Tobe T."/>
            <person name="Iida T."/>
            <person name="Takami H."/>
            <person name="Honda T."/>
            <person name="Sasakawa C."/>
            <person name="Ogasawara N."/>
            <person name="Yasunaga T."/>
            <person name="Kuhara S."/>
            <person name="Shiba T."/>
            <person name="Hattori M."/>
            <person name="Shinagawa H."/>
        </authorList>
    </citation>
    <scope>NUCLEOTIDE SEQUENCE [LARGE SCALE GENOMIC DNA]</scope>
    <source>
        <strain>O157:H7 / Sakai / RIMD 0509952 / EHEC</strain>
    </source>
</reference>
<proteinExistence type="inferred from homology"/>
<comment type="function">
    <text evidence="1">Essential cell division protein that coordinates cell division and chromosome segregation. The N-terminus is involved in assembly of the cell-division machinery. The C-terminus functions as a DNA motor that moves dsDNA in an ATP-dependent manner towards the dif recombination site, which is located within the replication terminus region. Translocation stops specifically at Xer-dif sites, where FtsK interacts with the Xer recombinase, allowing activation of chromosome unlinking by recombination. FtsK orienting polar sequences (KOPS) guide the direction of DNA translocation. FtsK can remove proteins from DNA as it translocates, but translocation stops specifically at XerCD-dif site, thereby preventing removal of XerC and XerD from dif (By similarity).</text>
</comment>
<comment type="subunit">
    <text evidence="1">Homohexamer. Forms a ring that surrounds DNA (By similarity).</text>
</comment>
<comment type="subcellular location">
    <subcellularLocation>
        <location evidence="1">Cell inner membrane</location>
        <topology evidence="1">Multi-pass membrane protein</topology>
    </subcellularLocation>
    <text evidence="1">Located at the septum.</text>
</comment>
<comment type="domain">
    <text evidence="1">Consists of an N-terminal domain, which is sufficient for the localization to the septal ring and is required for cell division, followed by a linker domain, and a C-terminal domain, which forms the translocation motor involved in chromosome segregation. The C-terminal domain can be further subdivided into alpha, beta and gamma subdomains. The alpha and beta subdomains multimerise to produce a hexameric ring, contain the nucleotide binding motif and form the DNA pump. The gamma subdomain is a regulatory subdomain that controls translocation of DNA by recognition of KOPS motifs and interacts with XerD recombinase (By similarity).</text>
</comment>
<comment type="similarity">
    <text evidence="5">Belongs to the FtsK/SpoIIIE/SftA family.</text>
</comment>
<accession>Q8X5H9</accession>
<feature type="chain" id="PRO_0000098258" description="DNA translocase FtsK">
    <location>
        <begin position="1"/>
        <end position="1342"/>
    </location>
</feature>
<feature type="topological domain" description="Cytoplasmic" evidence="2">
    <location>
        <begin position="1"/>
        <end position="24"/>
    </location>
</feature>
<feature type="transmembrane region" description="Helical" evidence="2">
    <location>
        <begin position="25"/>
        <end position="44"/>
    </location>
</feature>
<feature type="topological domain" description="Periplasmic" evidence="2">
    <location>
        <begin position="45"/>
        <end position="74"/>
    </location>
</feature>
<feature type="transmembrane region" description="Helical" evidence="2">
    <location>
        <begin position="75"/>
        <end position="98"/>
    </location>
</feature>
<feature type="topological domain" description="Cytoplasmic" evidence="2">
    <location>
        <begin position="99"/>
        <end position="115"/>
    </location>
</feature>
<feature type="transmembrane region" description="Helical" evidence="2">
    <location>
        <begin position="116"/>
        <end position="132"/>
    </location>
</feature>
<feature type="topological domain" description="Periplasmic" evidence="2">
    <location>
        <begin position="133"/>
        <end position="162"/>
    </location>
</feature>
<feature type="transmembrane region" description="Helical" evidence="2">
    <location>
        <begin position="163"/>
        <end position="179"/>
    </location>
</feature>
<feature type="topological domain" description="Cytoplasmic" evidence="2">
    <location>
        <begin position="180"/>
        <end position="1342"/>
    </location>
</feature>
<feature type="domain" description="FtsK" evidence="3">
    <location>
        <begin position="987"/>
        <end position="1200"/>
    </location>
</feature>
<feature type="region of interest" description="Disordered" evidence="4">
    <location>
        <begin position="345"/>
        <end position="386"/>
    </location>
</feature>
<feature type="region of interest" description="Disordered" evidence="4">
    <location>
        <begin position="434"/>
        <end position="489"/>
    </location>
</feature>
<feature type="region of interest" description="Disordered" evidence="4">
    <location>
        <begin position="576"/>
        <end position="862"/>
    </location>
</feature>
<feature type="compositionally biased region" description="Polar residues" evidence="4">
    <location>
        <begin position="437"/>
        <end position="448"/>
    </location>
</feature>
<feature type="compositionally biased region" description="Low complexity" evidence="4">
    <location>
        <begin position="449"/>
        <end position="480"/>
    </location>
</feature>
<feature type="compositionally biased region" description="Basic and acidic residues" evidence="4">
    <location>
        <begin position="619"/>
        <end position="628"/>
    </location>
</feature>
<feature type="compositionally biased region" description="Low complexity" evidence="4">
    <location>
        <begin position="657"/>
        <end position="666"/>
    </location>
</feature>
<feature type="compositionally biased region" description="Polar residues" evidence="4">
    <location>
        <begin position="690"/>
        <end position="699"/>
    </location>
</feature>
<feature type="compositionally biased region" description="Low complexity" evidence="4">
    <location>
        <begin position="738"/>
        <end position="829"/>
    </location>
</feature>
<feature type="compositionally biased region" description="Low complexity" evidence="4">
    <location>
        <begin position="849"/>
        <end position="859"/>
    </location>
</feature>
<feature type="binding site" evidence="3">
    <location>
        <begin position="1007"/>
        <end position="1012"/>
    </location>
    <ligand>
        <name>ATP</name>
        <dbReference type="ChEBI" id="CHEBI:30616"/>
    </ligand>
</feature>